<sequence>MSDKPDMGEIQKFNKSKLKKTETQEKNPLPSKETIEQEKQAGES</sequence>
<proteinExistence type="inferred from homology"/>
<accession>Q7YRC3</accession>
<organism>
    <name type="scientific">Notamacropus eugenii</name>
    <name type="common">Tammar wallaby</name>
    <name type="synonym">Macropus eugenii</name>
    <dbReference type="NCBI Taxonomy" id="9315"/>
    <lineage>
        <taxon>Eukaryota</taxon>
        <taxon>Metazoa</taxon>
        <taxon>Chordata</taxon>
        <taxon>Craniata</taxon>
        <taxon>Vertebrata</taxon>
        <taxon>Euteleostomi</taxon>
        <taxon>Mammalia</taxon>
        <taxon>Metatheria</taxon>
        <taxon>Diprotodontia</taxon>
        <taxon>Macropodidae</taxon>
        <taxon>Notamacropus</taxon>
    </lineage>
</organism>
<evidence type="ECO:0000250" key="1">
    <source>
        <dbReference type="UniProtKB" id="P62326"/>
    </source>
</evidence>
<evidence type="ECO:0000250" key="2">
    <source>
        <dbReference type="UniProtKB" id="P62328"/>
    </source>
</evidence>
<evidence type="ECO:0000256" key="3">
    <source>
        <dbReference type="SAM" id="MobiDB-lite"/>
    </source>
</evidence>
<evidence type="ECO:0000305" key="4"/>
<comment type="function">
    <text evidence="2">Plays an important role in the organization of the cytoskeleton. Binds to and sequesters actin monomers (G actin) and therefore inhibits actin polymerization.</text>
</comment>
<comment type="function">
    <molecule>Hemoregulatory peptide AcSDKP</molecule>
    <text evidence="1">Potent inhibitor of bone marrow derived stem cell differentiation (By similarity). Acts by inhibits the entry of hematopoietic pluripotent stem cells into the S-phase (By similarity).</text>
</comment>
<comment type="subunit">
    <text evidence="1 2">Identified in a complex composed of ACTA1, COBL, GSN AND TMSB4X (By similarity). Interacts with SERPINB1 (By similarity).</text>
</comment>
<comment type="subcellular location">
    <subcellularLocation>
        <location evidence="2">Cytoplasm</location>
        <location evidence="2">Cytoskeleton</location>
    </subcellularLocation>
</comment>
<comment type="PTM">
    <molecule>Hemoregulatory peptide AcSDKP</molecule>
    <text evidence="2">AcSDKP is inactivated by ACE, which removes the dipeptide Lys-Pro from its C-terminus.</text>
</comment>
<comment type="similarity">
    <text evidence="4">Belongs to the thymosin beta family.</text>
</comment>
<reference key="1">
    <citation type="journal article" date="2003" name="Cytogenet. Genome Res.">
        <title>Assignment of the thymosin beta 4 X/Y chromosome (TMSB4X/Y) gene to tammar wallaby chromosome 5p by fluorescence in situ hybridisation.</title>
        <authorList>
            <person name="Waters P.D."/>
            <person name="Sankovic N."/>
            <person name="Kirby P.J."/>
            <person name="Delbridge M.L."/>
            <person name="Graves J.A."/>
        </authorList>
    </citation>
    <scope>NUCLEOTIDE SEQUENCE [GENOMIC DNA]</scope>
</reference>
<name>TYB4_NOTEU</name>
<gene>
    <name type="primary">TMSB4</name>
</gene>
<dbReference type="EMBL" id="AY341342">
    <property type="protein sequence ID" value="AAQ16584.1"/>
    <property type="molecule type" value="Genomic_DNA"/>
</dbReference>
<dbReference type="SMR" id="Q7YRC3"/>
<dbReference type="HOGENOM" id="CLU_208046_0_0_1"/>
<dbReference type="GO" id="GO:0005737">
    <property type="term" value="C:cytoplasm"/>
    <property type="evidence" value="ECO:0007669"/>
    <property type="project" value="UniProtKB-KW"/>
</dbReference>
<dbReference type="GO" id="GO:0005856">
    <property type="term" value="C:cytoskeleton"/>
    <property type="evidence" value="ECO:0007669"/>
    <property type="project" value="UniProtKB-SubCell"/>
</dbReference>
<dbReference type="GO" id="GO:0003785">
    <property type="term" value="F:actin monomer binding"/>
    <property type="evidence" value="ECO:0007669"/>
    <property type="project" value="InterPro"/>
</dbReference>
<dbReference type="GO" id="GO:0007015">
    <property type="term" value="P:actin filament organization"/>
    <property type="evidence" value="ECO:0007669"/>
    <property type="project" value="InterPro"/>
</dbReference>
<dbReference type="GO" id="GO:0030334">
    <property type="term" value="P:regulation of cell migration"/>
    <property type="evidence" value="ECO:0007669"/>
    <property type="project" value="TreeGrafter"/>
</dbReference>
<dbReference type="FunFam" id="1.20.5.520:FF:000001">
    <property type="entry name" value="Thymosin beta"/>
    <property type="match status" value="1"/>
</dbReference>
<dbReference type="Gene3D" id="1.20.5.520">
    <property type="entry name" value="Single helix bin"/>
    <property type="match status" value="1"/>
</dbReference>
<dbReference type="InterPro" id="IPR001152">
    <property type="entry name" value="Beta-thymosin"/>
</dbReference>
<dbReference type="InterPro" id="IPR038386">
    <property type="entry name" value="Beta-thymosin_sf"/>
</dbReference>
<dbReference type="PANTHER" id="PTHR12021">
    <property type="entry name" value="THYMOSIN BETA"/>
    <property type="match status" value="1"/>
</dbReference>
<dbReference type="PANTHER" id="PTHR12021:SF3">
    <property type="entry name" value="THYMOSIN BETA-4-LIKE"/>
    <property type="match status" value="1"/>
</dbReference>
<dbReference type="Pfam" id="PF01290">
    <property type="entry name" value="Thymosin"/>
    <property type="match status" value="1"/>
</dbReference>
<dbReference type="PIRSF" id="PIRSF001828">
    <property type="entry name" value="Thymosin_beta"/>
    <property type="match status" value="1"/>
</dbReference>
<dbReference type="SMART" id="SM00152">
    <property type="entry name" value="THY"/>
    <property type="match status" value="1"/>
</dbReference>
<dbReference type="PROSITE" id="PS00500">
    <property type="entry name" value="THYMOSIN_B4"/>
    <property type="match status" value="1"/>
</dbReference>
<feature type="initiator methionine" description="Removed" evidence="1">
    <location>
        <position position="1"/>
    </location>
</feature>
<feature type="chain" id="PRO_0000045922" description="Thymosin beta-4">
    <location>
        <begin position="2"/>
        <end position="44"/>
    </location>
</feature>
<feature type="peptide" id="PRO_0000034296" description="Hemoregulatory peptide AcSDKP" evidence="1">
    <location>
        <begin position="2"/>
        <end position="5"/>
    </location>
</feature>
<feature type="region of interest" description="Disordered" evidence="3">
    <location>
        <begin position="1"/>
        <end position="44"/>
    </location>
</feature>
<feature type="compositionally biased region" description="Basic and acidic residues" evidence="3">
    <location>
        <begin position="33"/>
        <end position="44"/>
    </location>
</feature>
<feature type="modified residue" description="N-acetylserine" evidence="1">
    <location>
        <position position="2"/>
    </location>
</feature>
<feature type="modified residue" description="Phosphoserine" evidence="2">
    <location>
        <position position="2"/>
    </location>
</feature>
<feature type="modified residue" description="N6-acetyllysine" evidence="2">
    <location>
        <position position="4"/>
    </location>
</feature>
<feature type="modified residue" description="N6-acetyllysine; alternate" evidence="2">
    <location>
        <position position="12"/>
    </location>
</feature>
<feature type="modified residue" description="Phosphothreonine" evidence="2">
    <location>
        <position position="23"/>
    </location>
</feature>
<feature type="modified residue" description="N6-acetyllysine" evidence="2">
    <location>
        <position position="26"/>
    </location>
</feature>
<feature type="modified residue" description="Phosphoserine" evidence="2">
    <location>
        <position position="31"/>
    </location>
</feature>
<feature type="modified residue" description="N6-acetyllysine" evidence="2">
    <location>
        <position position="32"/>
    </location>
</feature>
<feature type="modified residue" description="Phosphothreonine" evidence="2">
    <location>
        <position position="34"/>
    </location>
</feature>
<feature type="modified residue" description="N6-acetyllysine" evidence="2">
    <location>
        <position position="39"/>
    </location>
</feature>
<feature type="cross-link" description="Glycyl lysine isopeptide (Lys-Gly) (interchain with G-Cter in SUMO2); alternate" evidence="2">
    <location>
        <position position="12"/>
    </location>
</feature>
<protein>
    <recommendedName>
        <fullName>Thymosin beta-4</fullName>
        <shortName>T beta-4</shortName>
    </recommendedName>
    <component>
        <recommendedName>
            <fullName evidence="4">Hemoregulatory peptide AcSDKP</fullName>
        </recommendedName>
        <alternativeName>
            <fullName>N-acetyl-SDKP</fullName>
            <shortName>AcSDKP</shortName>
        </alternativeName>
        <alternativeName>
            <fullName evidence="2">Seraspenide</fullName>
        </alternativeName>
    </component>
</protein>
<keyword id="KW-0007">Acetylation</keyword>
<keyword id="KW-0009">Actin-binding</keyword>
<keyword id="KW-0963">Cytoplasm</keyword>
<keyword id="KW-0206">Cytoskeleton</keyword>
<keyword id="KW-1017">Isopeptide bond</keyword>
<keyword id="KW-0597">Phosphoprotein</keyword>
<keyword id="KW-0832">Ubl conjugation</keyword>